<name>TPIS_METS3</name>
<accession>A5ULP6</accession>
<gene>
    <name evidence="1" type="primary">tpiA</name>
    <name type="ordered locus">Msm_0919</name>
</gene>
<organism>
    <name type="scientific">Methanobrevibacter smithii (strain ATCC 35061 / DSM 861 / OCM 144 / PS)</name>
    <dbReference type="NCBI Taxonomy" id="420247"/>
    <lineage>
        <taxon>Archaea</taxon>
        <taxon>Methanobacteriati</taxon>
        <taxon>Methanobacteriota</taxon>
        <taxon>Methanomada group</taxon>
        <taxon>Methanobacteria</taxon>
        <taxon>Methanobacteriales</taxon>
        <taxon>Methanobacteriaceae</taxon>
        <taxon>Methanobrevibacter</taxon>
    </lineage>
</organism>
<evidence type="ECO:0000255" key="1">
    <source>
        <dbReference type="HAMAP-Rule" id="MF_00147"/>
    </source>
</evidence>
<protein>
    <recommendedName>
        <fullName evidence="1">Triosephosphate isomerase</fullName>
        <shortName evidence="1">TIM</shortName>
        <shortName evidence="1">TPI</shortName>
        <ecNumber evidence="1">5.3.1.1</ecNumber>
    </recommendedName>
    <alternativeName>
        <fullName evidence="1">Triose-phosphate isomerase</fullName>
    </alternativeName>
</protein>
<comment type="function">
    <text evidence="1">Involved in the gluconeogenesis. Catalyzes stereospecifically the conversion of dihydroxyacetone phosphate (DHAP) to D-glyceraldehyde-3-phosphate (G3P).</text>
</comment>
<comment type="catalytic activity">
    <reaction evidence="1">
        <text>D-glyceraldehyde 3-phosphate = dihydroxyacetone phosphate</text>
        <dbReference type="Rhea" id="RHEA:18585"/>
        <dbReference type="ChEBI" id="CHEBI:57642"/>
        <dbReference type="ChEBI" id="CHEBI:59776"/>
        <dbReference type="EC" id="5.3.1.1"/>
    </reaction>
</comment>
<comment type="pathway">
    <text evidence="1">Carbohydrate biosynthesis; gluconeogenesis.</text>
</comment>
<comment type="pathway">
    <text evidence="1">Carbohydrate degradation; glycolysis; D-glyceraldehyde 3-phosphate from glycerone phosphate: step 1/1.</text>
</comment>
<comment type="subunit">
    <text evidence="1">Homotetramer; dimer of dimers.</text>
</comment>
<comment type="subcellular location">
    <subcellularLocation>
        <location evidence="1">Cytoplasm</location>
    </subcellularLocation>
</comment>
<comment type="similarity">
    <text evidence="1">Belongs to the triosephosphate isomerase family.</text>
</comment>
<reference key="1">
    <citation type="journal article" date="2007" name="Proc. Natl. Acad. Sci. U.S.A.">
        <title>Genomic and metabolic adaptations of Methanobrevibacter smithii to the human gut.</title>
        <authorList>
            <person name="Samuel B.S."/>
            <person name="Hansen E.E."/>
            <person name="Manchester J.K."/>
            <person name="Coutinho P.M."/>
            <person name="Henrissat B."/>
            <person name="Fulton R."/>
            <person name="Latreille P."/>
            <person name="Kim K."/>
            <person name="Wilson R.K."/>
            <person name="Gordon J.I."/>
        </authorList>
    </citation>
    <scope>NUCLEOTIDE SEQUENCE [LARGE SCALE GENOMIC DNA]</scope>
    <source>
        <strain>ATCC 35061 / DSM 861 / OCM 144 / PS</strain>
    </source>
</reference>
<dbReference type="EC" id="5.3.1.1" evidence="1"/>
<dbReference type="EMBL" id="CP000678">
    <property type="protein sequence ID" value="ABQ87124.1"/>
    <property type="molecule type" value="Genomic_DNA"/>
</dbReference>
<dbReference type="RefSeq" id="WP_011954172.1">
    <property type="nucleotide sequence ID" value="NZ_CP117965.1"/>
</dbReference>
<dbReference type="SMR" id="A5ULP6"/>
<dbReference type="STRING" id="420247.Msm_0919"/>
<dbReference type="EnsemblBacteria" id="ABQ87124">
    <property type="protein sequence ID" value="ABQ87124"/>
    <property type="gene ID" value="Msm_0919"/>
</dbReference>
<dbReference type="GeneID" id="78817559"/>
<dbReference type="KEGG" id="msi:Msm_0919"/>
<dbReference type="PATRIC" id="fig|420247.28.peg.915"/>
<dbReference type="eggNOG" id="arCOG01087">
    <property type="taxonomic scope" value="Archaea"/>
</dbReference>
<dbReference type="HOGENOM" id="CLU_104921_0_0_2"/>
<dbReference type="UniPathway" id="UPA00109">
    <property type="reaction ID" value="UER00189"/>
</dbReference>
<dbReference type="UniPathway" id="UPA00138"/>
<dbReference type="Proteomes" id="UP000001992">
    <property type="component" value="Chromosome"/>
</dbReference>
<dbReference type="GO" id="GO:0005829">
    <property type="term" value="C:cytosol"/>
    <property type="evidence" value="ECO:0007669"/>
    <property type="project" value="TreeGrafter"/>
</dbReference>
<dbReference type="GO" id="GO:0004807">
    <property type="term" value="F:triose-phosphate isomerase activity"/>
    <property type="evidence" value="ECO:0007669"/>
    <property type="project" value="UniProtKB-UniRule"/>
</dbReference>
<dbReference type="GO" id="GO:0006094">
    <property type="term" value="P:gluconeogenesis"/>
    <property type="evidence" value="ECO:0007669"/>
    <property type="project" value="UniProtKB-UniRule"/>
</dbReference>
<dbReference type="GO" id="GO:0046166">
    <property type="term" value="P:glyceraldehyde-3-phosphate biosynthetic process"/>
    <property type="evidence" value="ECO:0007669"/>
    <property type="project" value="TreeGrafter"/>
</dbReference>
<dbReference type="GO" id="GO:0019563">
    <property type="term" value="P:glycerol catabolic process"/>
    <property type="evidence" value="ECO:0007669"/>
    <property type="project" value="TreeGrafter"/>
</dbReference>
<dbReference type="GO" id="GO:0006096">
    <property type="term" value="P:glycolytic process"/>
    <property type="evidence" value="ECO:0007669"/>
    <property type="project" value="UniProtKB-UniRule"/>
</dbReference>
<dbReference type="CDD" id="cd00311">
    <property type="entry name" value="TIM"/>
    <property type="match status" value="1"/>
</dbReference>
<dbReference type="FunFam" id="3.20.20.70:FF:000223">
    <property type="entry name" value="Triosephosphate isomerase"/>
    <property type="match status" value="1"/>
</dbReference>
<dbReference type="Gene3D" id="3.20.20.70">
    <property type="entry name" value="Aldolase class I"/>
    <property type="match status" value="1"/>
</dbReference>
<dbReference type="HAMAP" id="MF_00147_A">
    <property type="entry name" value="TIM_A"/>
    <property type="match status" value="1"/>
</dbReference>
<dbReference type="InterPro" id="IPR013785">
    <property type="entry name" value="Aldolase_TIM"/>
</dbReference>
<dbReference type="InterPro" id="IPR035990">
    <property type="entry name" value="TIM_sf"/>
</dbReference>
<dbReference type="InterPro" id="IPR000652">
    <property type="entry name" value="Triosephosphate_isomerase"/>
</dbReference>
<dbReference type="InterPro" id="IPR022891">
    <property type="entry name" value="Triosephosphate_isomerase_arc"/>
</dbReference>
<dbReference type="InterPro" id="IPR020861">
    <property type="entry name" value="Triosephosphate_isomerase_AS"/>
</dbReference>
<dbReference type="NCBIfam" id="NF003302">
    <property type="entry name" value="PRK04302.1"/>
    <property type="match status" value="1"/>
</dbReference>
<dbReference type="NCBIfam" id="TIGR00419">
    <property type="entry name" value="tim"/>
    <property type="match status" value="1"/>
</dbReference>
<dbReference type="PANTHER" id="PTHR21139">
    <property type="entry name" value="TRIOSEPHOSPHATE ISOMERASE"/>
    <property type="match status" value="1"/>
</dbReference>
<dbReference type="PANTHER" id="PTHR21139:SF42">
    <property type="entry name" value="TRIOSEPHOSPHATE ISOMERASE"/>
    <property type="match status" value="1"/>
</dbReference>
<dbReference type="Pfam" id="PF00121">
    <property type="entry name" value="TIM"/>
    <property type="match status" value="1"/>
</dbReference>
<dbReference type="SUPFAM" id="SSF51351">
    <property type="entry name" value="Triosephosphate isomerase (TIM)"/>
    <property type="match status" value="1"/>
</dbReference>
<dbReference type="PROSITE" id="PS00171">
    <property type="entry name" value="TIM_1"/>
    <property type="match status" value="1"/>
</dbReference>
<dbReference type="PROSITE" id="PS51440">
    <property type="entry name" value="TIM_2"/>
    <property type="match status" value="1"/>
</dbReference>
<sequence>MNTPIVILNYKTYLESSGENALELARALKSASEESGITMVAAPQAADIYRIQDQISLPIFAQHIDPITPGGHTGSNLIETLIEAGISGSLINHSENRMKLADIDEVIQLCKQNDIESCVCTNNIATSKAIATFSPDAVAVEPPELIGTGIPVSQAQPEVVEDSVKGVKSINKKIKVLCGAGISTGDDMKAAMDLGADGVLLASGIVKAKNPKEALLDLVSKL</sequence>
<keyword id="KW-0963">Cytoplasm</keyword>
<keyword id="KW-0312">Gluconeogenesis</keyword>
<keyword id="KW-0324">Glycolysis</keyword>
<keyword id="KW-0413">Isomerase</keyword>
<proteinExistence type="inferred from homology"/>
<feature type="chain" id="PRO_0000307604" description="Triosephosphate isomerase">
    <location>
        <begin position="1"/>
        <end position="222"/>
    </location>
</feature>
<feature type="active site" description="Electrophile" evidence="1">
    <location>
        <position position="93"/>
    </location>
</feature>
<feature type="active site" description="Proton acceptor" evidence="1">
    <location>
        <position position="141"/>
    </location>
</feature>
<feature type="binding site" evidence="1">
    <location>
        <begin position="9"/>
        <end position="11"/>
    </location>
    <ligand>
        <name>substrate</name>
    </ligand>
</feature>
<feature type="binding site" evidence="1">
    <location>
        <position position="146"/>
    </location>
    <ligand>
        <name>substrate</name>
    </ligand>
</feature>
<feature type="binding site" evidence="1">
    <location>
        <position position="181"/>
    </location>
    <ligand>
        <name>substrate</name>
    </ligand>
</feature>
<feature type="binding site" evidence="1">
    <location>
        <begin position="202"/>
        <end position="203"/>
    </location>
    <ligand>
        <name>substrate</name>
    </ligand>
</feature>